<sequence>MDTAELVALLHLASPALPIGAFSYSQGLEAALDAPLIRDADGARDWIASGLADVLAQGELPFLAHQLARWHAHDAAALADANDEFVASRESFELRRETEQMGWSLAQLCASLEWGDAARRATLASIPSVALPSAFAFAAAAHGATPDAALAAYAFGWVENQTAAAIKAVPLGQLAGQKIIVALREPIRDAVRRALATPPEAINTFAPQLGILSARHESQYSRLFRS</sequence>
<proteinExistence type="inferred from homology"/>
<reference key="1">
    <citation type="journal article" date="2004" name="Proc. Natl. Acad. Sci. U.S.A.">
        <title>Genomic plasticity of the causative agent of melioidosis, Burkholderia pseudomallei.</title>
        <authorList>
            <person name="Holden M.T.G."/>
            <person name="Titball R.W."/>
            <person name="Peacock S.J."/>
            <person name="Cerdeno-Tarraga A.-M."/>
            <person name="Atkins T."/>
            <person name="Crossman L.C."/>
            <person name="Pitt T."/>
            <person name="Churcher C."/>
            <person name="Mungall K.L."/>
            <person name="Bentley S.D."/>
            <person name="Sebaihia M."/>
            <person name="Thomson N.R."/>
            <person name="Bason N."/>
            <person name="Beacham I.R."/>
            <person name="Brooks K."/>
            <person name="Brown K.A."/>
            <person name="Brown N.F."/>
            <person name="Challis G.L."/>
            <person name="Cherevach I."/>
            <person name="Chillingworth T."/>
            <person name="Cronin A."/>
            <person name="Crossett B."/>
            <person name="Davis P."/>
            <person name="DeShazer D."/>
            <person name="Feltwell T."/>
            <person name="Fraser A."/>
            <person name="Hance Z."/>
            <person name="Hauser H."/>
            <person name="Holroyd S."/>
            <person name="Jagels K."/>
            <person name="Keith K.E."/>
            <person name="Maddison M."/>
            <person name="Moule S."/>
            <person name="Price C."/>
            <person name="Quail M.A."/>
            <person name="Rabbinowitsch E."/>
            <person name="Rutherford K."/>
            <person name="Sanders M."/>
            <person name="Simmonds M."/>
            <person name="Songsivilai S."/>
            <person name="Stevens K."/>
            <person name="Tumapa S."/>
            <person name="Vesaratchavest M."/>
            <person name="Whitehead S."/>
            <person name="Yeats C."/>
            <person name="Barrell B.G."/>
            <person name="Oyston P.C.F."/>
            <person name="Parkhill J."/>
        </authorList>
    </citation>
    <scope>NUCLEOTIDE SEQUENCE [LARGE SCALE GENOMIC DNA]</scope>
    <source>
        <strain>K96243</strain>
    </source>
</reference>
<organism>
    <name type="scientific">Burkholderia pseudomallei (strain K96243)</name>
    <dbReference type="NCBI Taxonomy" id="272560"/>
    <lineage>
        <taxon>Bacteria</taxon>
        <taxon>Pseudomonadati</taxon>
        <taxon>Pseudomonadota</taxon>
        <taxon>Betaproteobacteria</taxon>
        <taxon>Burkholderiales</taxon>
        <taxon>Burkholderiaceae</taxon>
        <taxon>Burkholderia</taxon>
        <taxon>pseudomallei group</taxon>
    </lineage>
</organism>
<accession>Q63RL1</accession>
<protein>
    <recommendedName>
        <fullName evidence="1">Urease accessory protein UreF</fullName>
    </recommendedName>
</protein>
<comment type="function">
    <text evidence="1">Required for maturation of urease via the functional incorporation of the urease nickel metallocenter.</text>
</comment>
<comment type="subunit">
    <text evidence="1">UreD, UreF and UreG form a complex that acts as a GTP-hydrolysis-dependent molecular chaperone, activating the urease apoprotein by helping to assemble the nickel containing metallocenter of UreC. The UreE protein probably delivers the nickel.</text>
</comment>
<comment type="subcellular location">
    <subcellularLocation>
        <location evidence="1">Cytoplasm</location>
    </subcellularLocation>
</comment>
<comment type="similarity">
    <text evidence="1">Belongs to the UreF family.</text>
</comment>
<evidence type="ECO:0000255" key="1">
    <source>
        <dbReference type="HAMAP-Rule" id="MF_01385"/>
    </source>
</evidence>
<feature type="chain" id="PRO_0000344105" description="Urease accessory protein UreF">
    <location>
        <begin position="1"/>
        <end position="226"/>
    </location>
</feature>
<dbReference type="EMBL" id="BX571965">
    <property type="protein sequence ID" value="CAH36669.1"/>
    <property type="molecule type" value="Genomic_DNA"/>
</dbReference>
<dbReference type="RefSeq" id="WP_004533998.1">
    <property type="nucleotide sequence ID" value="NZ_CP009538.1"/>
</dbReference>
<dbReference type="RefSeq" id="YP_109257.1">
    <property type="nucleotide sequence ID" value="NC_006350.1"/>
</dbReference>
<dbReference type="SMR" id="Q63RL1"/>
<dbReference type="STRING" id="272560.BPSL2661"/>
<dbReference type="KEGG" id="bps:BPSL2661"/>
<dbReference type="PATRIC" id="fig|272560.51.peg.2683"/>
<dbReference type="eggNOG" id="COG0830">
    <property type="taxonomic scope" value="Bacteria"/>
</dbReference>
<dbReference type="Proteomes" id="UP000000605">
    <property type="component" value="Chromosome 1"/>
</dbReference>
<dbReference type="GO" id="GO:0005737">
    <property type="term" value="C:cytoplasm"/>
    <property type="evidence" value="ECO:0007669"/>
    <property type="project" value="UniProtKB-SubCell"/>
</dbReference>
<dbReference type="GO" id="GO:0016151">
    <property type="term" value="F:nickel cation binding"/>
    <property type="evidence" value="ECO:0007669"/>
    <property type="project" value="UniProtKB-UniRule"/>
</dbReference>
<dbReference type="Gene3D" id="1.10.4190.10">
    <property type="entry name" value="Urease accessory protein UreF"/>
    <property type="match status" value="1"/>
</dbReference>
<dbReference type="HAMAP" id="MF_01385">
    <property type="entry name" value="UreF"/>
    <property type="match status" value="1"/>
</dbReference>
<dbReference type="InterPro" id="IPR002639">
    <property type="entry name" value="UreF"/>
</dbReference>
<dbReference type="InterPro" id="IPR038277">
    <property type="entry name" value="UreF_sf"/>
</dbReference>
<dbReference type="PANTHER" id="PTHR33620">
    <property type="entry name" value="UREASE ACCESSORY PROTEIN F"/>
    <property type="match status" value="1"/>
</dbReference>
<dbReference type="PANTHER" id="PTHR33620:SF1">
    <property type="entry name" value="UREASE ACCESSORY PROTEIN F"/>
    <property type="match status" value="1"/>
</dbReference>
<dbReference type="Pfam" id="PF01730">
    <property type="entry name" value="UreF"/>
    <property type="match status" value="1"/>
</dbReference>
<dbReference type="PIRSF" id="PIRSF009467">
    <property type="entry name" value="Ureas_acces_UreF"/>
    <property type="match status" value="1"/>
</dbReference>
<gene>
    <name evidence="1" type="primary">ureF</name>
    <name type="ordered locus">BPSL2661</name>
</gene>
<keyword id="KW-0143">Chaperone</keyword>
<keyword id="KW-0963">Cytoplasm</keyword>
<keyword id="KW-0996">Nickel insertion</keyword>
<keyword id="KW-1185">Reference proteome</keyword>
<name>UREF_BURPS</name>